<keyword id="KW-0274">FAD</keyword>
<keyword id="KW-0285">Flavoprotein</keyword>
<keyword id="KW-0560">Oxidoreductase</keyword>
<keyword id="KW-1185">Reference proteome</keyword>
<reference key="1">
    <citation type="journal article" date="1998" name="Nature">
        <title>Deciphering the biology of Mycobacterium tuberculosis from the complete genome sequence.</title>
        <authorList>
            <person name="Cole S.T."/>
            <person name="Brosch R."/>
            <person name="Parkhill J."/>
            <person name="Garnier T."/>
            <person name="Churcher C.M."/>
            <person name="Harris D.E."/>
            <person name="Gordon S.V."/>
            <person name="Eiglmeier K."/>
            <person name="Gas S."/>
            <person name="Barry C.E. III"/>
            <person name="Tekaia F."/>
            <person name="Badcock K."/>
            <person name="Basham D."/>
            <person name="Brown D."/>
            <person name="Chillingworth T."/>
            <person name="Connor R."/>
            <person name="Davies R.M."/>
            <person name="Devlin K."/>
            <person name="Feltwell T."/>
            <person name="Gentles S."/>
            <person name="Hamlin N."/>
            <person name="Holroyd S."/>
            <person name="Hornsby T."/>
            <person name="Jagels K."/>
            <person name="Krogh A."/>
            <person name="McLean J."/>
            <person name="Moule S."/>
            <person name="Murphy L.D."/>
            <person name="Oliver S."/>
            <person name="Osborne J."/>
            <person name="Quail M.A."/>
            <person name="Rajandream M.A."/>
            <person name="Rogers J."/>
            <person name="Rutter S."/>
            <person name="Seeger K."/>
            <person name="Skelton S."/>
            <person name="Squares S."/>
            <person name="Squares R."/>
            <person name="Sulston J.E."/>
            <person name="Taylor K."/>
            <person name="Whitehead S."/>
            <person name="Barrell B.G."/>
        </authorList>
    </citation>
    <scope>NUCLEOTIDE SEQUENCE [LARGE SCALE GENOMIC DNA]</scope>
    <source>
        <strain>ATCC 25618 / H37Rv</strain>
    </source>
</reference>
<reference key="2">
    <citation type="journal article" date="2011" name="Mol. Cell. Proteomics">
        <title>Proteogenomic analysis of Mycobacterium tuberculosis by high resolution mass spectrometry.</title>
        <authorList>
            <person name="Kelkar D.S."/>
            <person name="Kumar D."/>
            <person name="Kumar P."/>
            <person name="Balakrishnan L."/>
            <person name="Muthusamy B."/>
            <person name="Yadav A.K."/>
            <person name="Shrivastava P."/>
            <person name="Marimuthu A."/>
            <person name="Anand S."/>
            <person name="Sundaram H."/>
            <person name="Kingsbury R."/>
            <person name="Harsha H.C."/>
            <person name="Nair B."/>
            <person name="Prasad T.S."/>
            <person name="Chauhan D.S."/>
            <person name="Katoch K."/>
            <person name="Katoch V.M."/>
            <person name="Kumar P."/>
            <person name="Chaerkady R."/>
            <person name="Ramachandran S."/>
            <person name="Dash D."/>
            <person name="Pandey A."/>
        </authorList>
    </citation>
    <scope>IDENTIFICATION BY MASS SPECTROMETRY [LARGE SCALE ANALYSIS]</scope>
    <source>
        <strain>ATCC 25618 / H37Rv</strain>
    </source>
</reference>
<protein>
    <recommendedName>
        <fullName>Probable acyl-CoA dehydrogenase FadE10</fullName>
        <ecNumber>1.3.-.-</ecNumber>
    </recommendedName>
</protein>
<name>Y873_MYCTU</name>
<accession>P9WQF7</accession>
<accession>L0T558</accession>
<accession>O53885</accession>
<accession>P63429</accession>
<accession>Q10535</accession>
<sequence>MAQQTQVTEEQARALAEESRESGWDKPSFAKELFLGRFPLGLIHPFPKPSDAEEARTEAFLVKLREFLDTVDGSVIERAAQIPDEYVKGLAELGCFGLKIPSEYGGLNMSQVAYNRVLMMVTTVHSSLGALLSAHQSIGVPEPLKLAGTAEQKRRFLPRCAAGAISAFLLTEPDVGSDPARMASTATPIDDGQAYELEGVKLWTTNGVVADLLVVMARVPRSEGHRGGISAFVVEADSPGITVERRNKFMGLRGIENGVTRLHRVRVPKDNLIGREGDGLKIALTTLNAGRLSLPAIATGVAKQALKIAREWSVERVQWGKPVGQHEAVASKISFIAATNYALDAVVELSSQMADEGRNDIRIEAALAKLWSSEMACLVGDELLQIRGGRGYETAESLAARGERAVPVEQMVRDLRINRIFEGSSEIMRLLIAREAVDAHLTAAGDLANPKADLRQKAAAAAGASGFYAKWLPKLVFGEGQLPTTYREFGALATHLRFVERSSRKLARNTFYGMARWQASLEKKQGFLGRIVDIGAELFAISAACVRAEAQRTADPVEGEQAYELAEAFCQQATLRVEALFDALWSNTDSIDVRLANDVLEGRYTWLEQGILDQSEGTGPWIASWEPGPSTEANLARRFLTVSPSSEAKL</sequence>
<gene>
    <name type="primary">fadE10</name>
    <name type="ordered locus">Rv0873</name>
    <name type="ORF">MTCY31.01</name>
    <name type="ORF">MTV043.66</name>
</gene>
<dbReference type="EC" id="1.3.-.-"/>
<dbReference type="EMBL" id="AL123456">
    <property type="protein sequence ID" value="CCP43621.1"/>
    <property type="molecule type" value="Genomic_DNA"/>
</dbReference>
<dbReference type="PIR" id="A70817">
    <property type="entry name" value="A70817"/>
</dbReference>
<dbReference type="RefSeq" id="NP_215388.1">
    <property type="nucleotide sequence ID" value="NC_000962.3"/>
</dbReference>
<dbReference type="RefSeq" id="WP_003898626.1">
    <property type="nucleotide sequence ID" value="NZ_NVQJ01000001.1"/>
</dbReference>
<dbReference type="SMR" id="P9WQF7"/>
<dbReference type="FunCoup" id="P9WQF7">
    <property type="interactions" value="222"/>
</dbReference>
<dbReference type="STRING" id="83332.Rv0873"/>
<dbReference type="PaxDb" id="83332-Rv0873"/>
<dbReference type="DNASU" id="885636"/>
<dbReference type="GeneID" id="885636"/>
<dbReference type="KEGG" id="mtu:Rv0873"/>
<dbReference type="KEGG" id="mtv:RVBD_0873"/>
<dbReference type="TubercuList" id="Rv0873"/>
<dbReference type="eggNOG" id="COG1960">
    <property type="taxonomic scope" value="Bacteria"/>
</dbReference>
<dbReference type="InParanoid" id="P9WQF7"/>
<dbReference type="OrthoDB" id="8876745at2"/>
<dbReference type="PhylomeDB" id="P9WQF7"/>
<dbReference type="Proteomes" id="UP000001584">
    <property type="component" value="Chromosome"/>
</dbReference>
<dbReference type="GO" id="GO:0005737">
    <property type="term" value="C:cytoplasm"/>
    <property type="evidence" value="ECO:0000318"/>
    <property type="project" value="GO_Central"/>
</dbReference>
<dbReference type="GO" id="GO:0005829">
    <property type="term" value="C:cytosol"/>
    <property type="evidence" value="ECO:0007005"/>
    <property type="project" value="MTBBASE"/>
</dbReference>
<dbReference type="GO" id="GO:0009274">
    <property type="term" value="C:peptidoglycan-based cell wall"/>
    <property type="evidence" value="ECO:0007005"/>
    <property type="project" value="MTBBASE"/>
</dbReference>
<dbReference type="GO" id="GO:0005886">
    <property type="term" value="C:plasma membrane"/>
    <property type="evidence" value="ECO:0007005"/>
    <property type="project" value="MTBBASE"/>
</dbReference>
<dbReference type="GO" id="GO:0003995">
    <property type="term" value="F:acyl-CoA dehydrogenase activity"/>
    <property type="evidence" value="ECO:0000318"/>
    <property type="project" value="GO_Central"/>
</dbReference>
<dbReference type="GO" id="GO:0050660">
    <property type="term" value="F:flavin adenine dinucleotide binding"/>
    <property type="evidence" value="ECO:0007669"/>
    <property type="project" value="InterPro"/>
</dbReference>
<dbReference type="GO" id="GO:0033539">
    <property type="term" value="P:fatty acid beta-oxidation using acyl-CoA dehydrogenase"/>
    <property type="evidence" value="ECO:0000318"/>
    <property type="project" value="GO_Central"/>
</dbReference>
<dbReference type="FunFam" id="1.20.140.10:FF:000019">
    <property type="entry name" value="Acyl-CoA dehydrogenase"/>
    <property type="match status" value="1"/>
</dbReference>
<dbReference type="FunFam" id="1.20.140.10:FF:000042">
    <property type="entry name" value="Acyl-CoA dehydrogenase FadE10"/>
    <property type="match status" value="1"/>
</dbReference>
<dbReference type="FunFam" id="2.40.110.10:FF:000023">
    <property type="entry name" value="Acyl-CoA dehydrogenase FadE10"/>
    <property type="match status" value="1"/>
</dbReference>
<dbReference type="FunFam" id="1.10.540.10:FF:000001">
    <property type="entry name" value="Very long-chain-specific acyl-CoA dehydrogenase, mitochondrial"/>
    <property type="match status" value="1"/>
</dbReference>
<dbReference type="Gene3D" id="1.10.540.10">
    <property type="entry name" value="Acyl-CoA dehydrogenase/oxidase, N-terminal domain"/>
    <property type="match status" value="1"/>
</dbReference>
<dbReference type="Gene3D" id="2.40.110.10">
    <property type="entry name" value="Butyryl-CoA Dehydrogenase, subunit A, domain 2"/>
    <property type="match status" value="1"/>
</dbReference>
<dbReference type="Gene3D" id="1.20.140.10">
    <property type="entry name" value="Butyryl-CoA Dehydrogenase, subunit A, domain 3"/>
    <property type="match status" value="2"/>
</dbReference>
<dbReference type="InterPro" id="IPR050741">
    <property type="entry name" value="Acyl-CoA_dehydrogenase"/>
</dbReference>
<dbReference type="InterPro" id="IPR006091">
    <property type="entry name" value="Acyl-CoA_Oxase/DH_mid-dom"/>
</dbReference>
<dbReference type="InterPro" id="IPR046373">
    <property type="entry name" value="Acyl-CoA_Oxase/DH_mid-dom_sf"/>
</dbReference>
<dbReference type="InterPro" id="IPR036250">
    <property type="entry name" value="AcylCo_DH-like_C"/>
</dbReference>
<dbReference type="InterPro" id="IPR009075">
    <property type="entry name" value="AcylCo_DH/oxidase_C"/>
</dbReference>
<dbReference type="InterPro" id="IPR013786">
    <property type="entry name" value="AcylCoA_DH/ox_N"/>
</dbReference>
<dbReference type="InterPro" id="IPR037069">
    <property type="entry name" value="AcylCoA_DH/ox_N_sf"/>
</dbReference>
<dbReference type="InterPro" id="IPR009100">
    <property type="entry name" value="AcylCoA_DH/oxidase_NM_dom_sf"/>
</dbReference>
<dbReference type="PANTHER" id="PTHR48083:SF31">
    <property type="entry name" value="ACYL-COA DEHYDROGENASE FADE10-RELATED"/>
    <property type="match status" value="1"/>
</dbReference>
<dbReference type="PANTHER" id="PTHR48083">
    <property type="entry name" value="MEDIUM-CHAIN SPECIFIC ACYL-COA DEHYDROGENASE, MITOCHONDRIAL-RELATED"/>
    <property type="match status" value="1"/>
</dbReference>
<dbReference type="Pfam" id="PF00441">
    <property type="entry name" value="Acyl-CoA_dh_1"/>
    <property type="match status" value="1"/>
</dbReference>
<dbReference type="Pfam" id="PF02770">
    <property type="entry name" value="Acyl-CoA_dh_M"/>
    <property type="match status" value="1"/>
</dbReference>
<dbReference type="Pfam" id="PF02771">
    <property type="entry name" value="Acyl-CoA_dh_N"/>
    <property type="match status" value="1"/>
</dbReference>
<dbReference type="SUPFAM" id="SSF47203">
    <property type="entry name" value="Acyl-CoA dehydrogenase C-terminal domain-like"/>
    <property type="match status" value="1"/>
</dbReference>
<dbReference type="SUPFAM" id="SSF56645">
    <property type="entry name" value="Acyl-CoA dehydrogenase NM domain-like"/>
    <property type="match status" value="1"/>
</dbReference>
<comment type="catalytic activity">
    <reaction>
        <text>a 2,3-saturated acyl-CoA + A = a 2,3-dehydroacyl-CoA + AH2</text>
        <dbReference type="Rhea" id="RHEA:48608"/>
        <dbReference type="ChEBI" id="CHEBI:13193"/>
        <dbReference type="ChEBI" id="CHEBI:17499"/>
        <dbReference type="ChEBI" id="CHEBI:60015"/>
        <dbReference type="ChEBI" id="CHEBI:65111"/>
    </reaction>
</comment>
<comment type="cofactor">
    <cofactor evidence="1">
        <name>FAD</name>
        <dbReference type="ChEBI" id="CHEBI:57692"/>
    </cofactor>
</comment>
<comment type="similarity">
    <text evidence="3">Belongs to the acyl-CoA dehydrogenase family.</text>
</comment>
<evidence type="ECO:0000250" key="1"/>
<evidence type="ECO:0000256" key="2">
    <source>
        <dbReference type="SAM" id="MobiDB-lite"/>
    </source>
</evidence>
<evidence type="ECO:0000305" key="3"/>
<proteinExistence type="evidence at protein level"/>
<feature type="chain" id="PRO_0000201209" description="Probable acyl-CoA dehydrogenase FadE10">
    <location>
        <begin position="1"/>
        <end position="650"/>
    </location>
</feature>
<feature type="region of interest" description="Disordered" evidence="2">
    <location>
        <begin position="1"/>
        <end position="23"/>
    </location>
</feature>
<feature type="compositionally biased region" description="Basic and acidic residues" evidence="2">
    <location>
        <begin position="10"/>
        <end position="23"/>
    </location>
</feature>
<feature type="active site" description="Proton acceptor" evidence="1">
    <location>
        <position position="422"/>
    </location>
</feature>
<organism>
    <name type="scientific">Mycobacterium tuberculosis (strain ATCC 25618 / H37Rv)</name>
    <dbReference type="NCBI Taxonomy" id="83332"/>
    <lineage>
        <taxon>Bacteria</taxon>
        <taxon>Bacillati</taxon>
        <taxon>Actinomycetota</taxon>
        <taxon>Actinomycetes</taxon>
        <taxon>Mycobacteriales</taxon>
        <taxon>Mycobacteriaceae</taxon>
        <taxon>Mycobacterium</taxon>
        <taxon>Mycobacterium tuberculosis complex</taxon>
    </lineage>
</organism>